<accession>Q8PIP8</accession>
<gene>
    <name evidence="1" type="primary">gltX</name>
    <name type="synonym">gluS</name>
    <name type="ordered locus">XAC2847</name>
</gene>
<evidence type="ECO:0000255" key="1">
    <source>
        <dbReference type="HAMAP-Rule" id="MF_00022"/>
    </source>
</evidence>
<protein>
    <recommendedName>
        <fullName evidence="1">Glutamate--tRNA ligase</fullName>
        <ecNumber evidence="1">6.1.1.17</ecNumber>
    </recommendedName>
    <alternativeName>
        <fullName evidence="1">Glutamyl-tRNA synthetase</fullName>
        <shortName evidence="1">GluRS</shortName>
    </alternativeName>
</protein>
<reference key="1">
    <citation type="journal article" date="2002" name="Nature">
        <title>Comparison of the genomes of two Xanthomonas pathogens with differing host specificities.</title>
        <authorList>
            <person name="da Silva A.C.R."/>
            <person name="Ferro J.A."/>
            <person name="Reinach F.C."/>
            <person name="Farah C.S."/>
            <person name="Furlan L.R."/>
            <person name="Quaggio R.B."/>
            <person name="Monteiro-Vitorello C.B."/>
            <person name="Van Sluys M.A."/>
            <person name="Almeida N.F. Jr."/>
            <person name="Alves L.M.C."/>
            <person name="do Amaral A.M."/>
            <person name="Bertolini M.C."/>
            <person name="Camargo L.E.A."/>
            <person name="Camarotte G."/>
            <person name="Cannavan F."/>
            <person name="Cardozo J."/>
            <person name="Chambergo F."/>
            <person name="Ciapina L.P."/>
            <person name="Cicarelli R.M.B."/>
            <person name="Coutinho L.L."/>
            <person name="Cursino-Santos J.R."/>
            <person name="El-Dorry H."/>
            <person name="Faria J.B."/>
            <person name="Ferreira A.J.S."/>
            <person name="Ferreira R.C.C."/>
            <person name="Ferro M.I.T."/>
            <person name="Formighieri E.F."/>
            <person name="Franco M.C."/>
            <person name="Greggio C.C."/>
            <person name="Gruber A."/>
            <person name="Katsuyama A.M."/>
            <person name="Kishi L.T."/>
            <person name="Leite R.P."/>
            <person name="Lemos E.G.M."/>
            <person name="Lemos M.V.F."/>
            <person name="Locali E.C."/>
            <person name="Machado M.A."/>
            <person name="Madeira A.M.B.N."/>
            <person name="Martinez-Rossi N.M."/>
            <person name="Martins E.C."/>
            <person name="Meidanis J."/>
            <person name="Menck C.F.M."/>
            <person name="Miyaki C.Y."/>
            <person name="Moon D.H."/>
            <person name="Moreira L.M."/>
            <person name="Novo M.T.M."/>
            <person name="Okura V.K."/>
            <person name="Oliveira M.C."/>
            <person name="Oliveira V.R."/>
            <person name="Pereira H.A."/>
            <person name="Rossi A."/>
            <person name="Sena J.A.D."/>
            <person name="Silva C."/>
            <person name="de Souza R.F."/>
            <person name="Spinola L.A.F."/>
            <person name="Takita M.A."/>
            <person name="Tamura R.E."/>
            <person name="Teixeira E.C."/>
            <person name="Tezza R.I.D."/>
            <person name="Trindade dos Santos M."/>
            <person name="Truffi D."/>
            <person name="Tsai S.M."/>
            <person name="White F.F."/>
            <person name="Setubal J.C."/>
            <person name="Kitajima J.P."/>
        </authorList>
    </citation>
    <scope>NUCLEOTIDE SEQUENCE [LARGE SCALE GENOMIC DNA]</scope>
    <source>
        <strain>306</strain>
    </source>
</reference>
<keyword id="KW-0030">Aminoacyl-tRNA synthetase</keyword>
<keyword id="KW-0067">ATP-binding</keyword>
<keyword id="KW-0963">Cytoplasm</keyword>
<keyword id="KW-0436">Ligase</keyword>
<keyword id="KW-0547">Nucleotide-binding</keyword>
<keyword id="KW-0648">Protein biosynthesis</keyword>
<comment type="function">
    <text evidence="1">Catalyzes the attachment of glutamate to tRNA(Glu) in a two-step reaction: glutamate is first activated by ATP to form Glu-AMP and then transferred to the acceptor end of tRNA(Glu).</text>
</comment>
<comment type="catalytic activity">
    <reaction evidence="1">
        <text>tRNA(Glu) + L-glutamate + ATP = L-glutamyl-tRNA(Glu) + AMP + diphosphate</text>
        <dbReference type="Rhea" id="RHEA:23540"/>
        <dbReference type="Rhea" id="RHEA-COMP:9663"/>
        <dbReference type="Rhea" id="RHEA-COMP:9680"/>
        <dbReference type="ChEBI" id="CHEBI:29985"/>
        <dbReference type="ChEBI" id="CHEBI:30616"/>
        <dbReference type="ChEBI" id="CHEBI:33019"/>
        <dbReference type="ChEBI" id="CHEBI:78442"/>
        <dbReference type="ChEBI" id="CHEBI:78520"/>
        <dbReference type="ChEBI" id="CHEBI:456215"/>
        <dbReference type="EC" id="6.1.1.17"/>
    </reaction>
</comment>
<comment type="subunit">
    <text evidence="1">Monomer.</text>
</comment>
<comment type="subcellular location">
    <subcellularLocation>
        <location evidence="1">Cytoplasm</location>
    </subcellularLocation>
</comment>
<comment type="similarity">
    <text evidence="1">Belongs to the class-I aminoacyl-tRNA synthetase family. Glutamate--tRNA ligase type 1 subfamily.</text>
</comment>
<proteinExistence type="inferred from homology"/>
<organism>
    <name type="scientific">Xanthomonas axonopodis pv. citri (strain 306)</name>
    <dbReference type="NCBI Taxonomy" id="190486"/>
    <lineage>
        <taxon>Bacteria</taxon>
        <taxon>Pseudomonadati</taxon>
        <taxon>Pseudomonadota</taxon>
        <taxon>Gammaproteobacteria</taxon>
        <taxon>Lysobacterales</taxon>
        <taxon>Lysobacteraceae</taxon>
        <taxon>Xanthomonas</taxon>
    </lineage>
</organism>
<name>SYE_XANAC</name>
<feature type="chain" id="PRO_0000119703" description="Glutamate--tRNA ligase">
    <location>
        <begin position="1"/>
        <end position="467"/>
    </location>
</feature>
<feature type="short sequence motif" description="'HIGH' region" evidence="1">
    <location>
        <begin position="9"/>
        <end position="19"/>
    </location>
</feature>
<feature type="short sequence motif" description="'KMSKS' region" evidence="1">
    <location>
        <begin position="237"/>
        <end position="241"/>
    </location>
</feature>
<feature type="binding site" evidence="1">
    <location>
        <position position="240"/>
    </location>
    <ligand>
        <name>ATP</name>
        <dbReference type="ChEBI" id="CHEBI:30616"/>
    </ligand>
</feature>
<dbReference type="EC" id="6.1.1.17" evidence="1"/>
<dbReference type="EMBL" id="AE008923">
    <property type="protein sequence ID" value="AAM37692.1"/>
    <property type="molecule type" value="Genomic_DNA"/>
</dbReference>
<dbReference type="RefSeq" id="WP_011051870.1">
    <property type="nucleotide sequence ID" value="NC_003919.1"/>
</dbReference>
<dbReference type="SMR" id="Q8PIP8"/>
<dbReference type="GeneID" id="66911935"/>
<dbReference type="KEGG" id="xac:XAC2847"/>
<dbReference type="eggNOG" id="COG0008">
    <property type="taxonomic scope" value="Bacteria"/>
</dbReference>
<dbReference type="HOGENOM" id="CLU_015768_6_0_6"/>
<dbReference type="Proteomes" id="UP000000576">
    <property type="component" value="Chromosome"/>
</dbReference>
<dbReference type="GO" id="GO:0005829">
    <property type="term" value="C:cytosol"/>
    <property type="evidence" value="ECO:0007669"/>
    <property type="project" value="TreeGrafter"/>
</dbReference>
<dbReference type="GO" id="GO:0005524">
    <property type="term" value="F:ATP binding"/>
    <property type="evidence" value="ECO:0007669"/>
    <property type="project" value="UniProtKB-UniRule"/>
</dbReference>
<dbReference type="GO" id="GO:0004818">
    <property type="term" value="F:glutamate-tRNA ligase activity"/>
    <property type="evidence" value="ECO:0007669"/>
    <property type="project" value="UniProtKB-UniRule"/>
</dbReference>
<dbReference type="GO" id="GO:0000049">
    <property type="term" value="F:tRNA binding"/>
    <property type="evidence" value="ECO:0007669"/>
    <property type="project" value="InterPro"/>
</dbReference>
<dbReference type="GO" id="GO:0008270">
    <property type="term" value="F:zinc ion binding"/>
    <property type="evidence" value="ECO:0007669"/>
    <property type="project" value="InterPro"/>
</dbReference>
<dbReference type="GO" id="GO:0006424">
    <property type="term" value="P:glutamyl-tRNA aminoacylation"/>
    <property type="evidence" value="ECO:0007669"/>
    <property type="project" value="UniProtKB-UniRule"/>
</dbReference>
<dbReference type="CDD" id="cd00808">
    <property type="entry name" value="GluRS_core"/>
    <property type="match status" value="1"/>
</dbReference>
<dbReference type="FunFam" id="3.40.50.620:FF:000007">
    <property type="entry name" value="Glutamate--tRNA ligase"/>
    <property type="match status" value="1"/>
</dbReference>
<dbReference type="Gene3D" id="1.10.10.350">
    <property type="match status" value="1"/>
</dbReference>
<dbReference type="Gene3D" id="3.40.50.620">
    <property type="entry name" value="HUPs"/>
    <property type="match status" value="1"/>
</dbReference>
<dbReference type="HAMAP" id="MF_00022">
    <property type="entry name" value="Glu_tRNA_synth_type1"/>
    <property type="match status" value="1"/>
</dbReference>
<dbReference type="InterPro" id="IPR045462">
    <property type="entry name" value="aa-tRNA-synth_I_cd-bd"/>
</dbReference>
<dbReference type="InterPro" id="IPR020751">
    <property type="entry name" value="aa-tRNA-synth_I_codon-bd_sub2"/>
</dbReference>
<dbReference type="InterPro" id="IPR001412">
    <property type="entry name" value="aa-tRNA-synth_I_CS"/>
</dbReference>
<dbReference type="InterPro" id="IPR008925">
    <property type="entry name" value="aa_tRNA-synth_I_cd-bd_sf"/>
</dbReference>
<dbReference type="InterPro" id="IPR004527">
    <property type="entry name" value="Glu-tRNA-ligase_bac/mito"/>
</dbReference>
<dbReference type="InterPro" id="IPR000924">
    <property type="entry name" value="Glu/Gln-tRNA-synth"/>
</dbReference>
<dbReference type="InterPro" id="IPR020058">
    <property type="entry name" value="Glu/Gln-tRNA-synth_Ib_cat-dom"/>
</dbReference>
<dbReference type="InterPro" id="IPR049940">
    <property type="entry name" value="GluQ/Sye"/>
</dbReference>
<dbReference type="InterPro" id="IPR033910">
    <property type="entry name" value="GluRS_core"/>
</dbReference>
<dbReference type="InterPro" id="IPR014729">
    <property type="entry name" value="Rossmann-like_a/b/a_fold"/>
</dbReference>
<dbReference type="NCBIfam" id="TIGR00464">
    <property type="entry name" value="gltX_bact"/>
    <property type="match status" value="1"/>
</dbReference>
<dbReference type="PANTHER" id="PTHR43311">
    <property type="entry name" value="GLUTAMATE--TRNA LIGASE"/>
    <property type="match status" value="1"/>
</dbReference>
<dbReference type="PANTHER" id="PTHR43311:SF2">
    <property type="entry name" value="GLUTAMATE--TRNA LIGASE, MITOCHONDRIAL-RELATED"/>
    <property type="match status" value="1"/>
</dbReference>
<dbReference type="Pfam" id="PF19269">
    <property type="entry name" value="Anticodon_2"/>
    <property type="match status" value="1"/>
</dbReference>
<dbReference type="Pfam" id="PF00749">
    <property type="entry name" value="tRNA-synt_1c"/>
    <property type="match status" value="1"/>
</dbReference>
<dbReference type="PRINTS" id="PR00987">
    <property type="entry name" value="TRNASYNTHGLU"/>
</dbReference>
<dbReference type="SUPFAM" id="SSF48163">
    <property type="entry name" value="An anticodon-binding domain of class I aminoacyl-tRNA synthetases"/>
    <property type="match status" value="1"/>
</dbReference>
<dbReference type="SUPFAM" id="SSF52374">
    <property type="entry name" value="Nucleotidylyl transferase"/>
    <property type="match status" value="1"/>
</dbReference>
<dbReference type="PROSITE" id="PS00178">
    <property type="entry name" value="AA_TRNA_LIGASE_I"/>
    <property type="match status" value="1"/>
</dbReference>
<sequence>MTCRTRFAPSPTGYLHIGGARTALYCWLEARHRGGQFVLRIEDTDRERSTQEAIDAILEAMDWLGLGYDEGPIYQTQRVARYQEVAEQLLAQGKAYYAYETREELDAMREAAMAKQEKPRYNGAAREQNLPYRDDPNRVIRFKNPVGGTVVFDDLIKGRIEIANSELDDMVIFRPDGFPTYNFAVVVDDWDMGITEVIRGDDHINNTPRQINIYEALDAPVPKFAHMPMILDEQGAKLSKRTGAADVMQYKDAGYLPHALINYLARLGWSHGDQELFTQQELLDLFDVKDVNSKAARLDMAKLGWVNQHYLKTDDPASIAPQLEYQLAKLGVDIAAGPAAADVVVALRERVQTLKEMAEKAVVWYQPLETYDEAAVMKHLKLGAEVPLGKARELLAAVDAWSVESVSAALHDAAAALELGMGKVAQPLRVAITGTQVSPDISQTVYLAGREGALKRIDAALIKIGAA</sequence>